<name>Y303_ARCFU</name>
<evidence type="ECO:0000255" key="1"/>
<evidence type="ECO:0000305" key="2"/>
<gene>
    <name type="ordered locus">AF_0303</name>
</gene>
<protein>
    <recommendedName>
        <fullName>Uncharacterized protein AF_0303</fullName>
    </recommendedName>
</protein>
<reference key="1">
    <citation type="journal article" date="1997" name="Nature">
        <title>The complete genome sequence of the hyperthermophilic, sulphate-reducing archaeon Archaeoglobus fulgidus.</title>
        <authorList>
            <person name="Klenk H.-P."/>
            <person name="Clayton R.A."/>
            <person name="Tomb J.-F."/>
            <person name="White O."/>
            <person name="Nelson K.E."/>
            <person name="Ketchum K.A."/>
            <person name="Dodson R.J."/>
            <person name="Gwinn M.L."/>
            <person name="Hickey E.K."/>
            <person name="Peterson J.D."/>
            <person name="Richardson D.L."/>
            <person name="Kerlavage A.R."/>
            <person name="Graham D.E."/>
            <person name="Kyrpides N.C."/>
            <person name="Fleischmann R.D."/>
            <person name="Quackenbush J."/>
            <person name="Lee N.H."/>
            <person name="Sutton G.G."/>
            <person name="Gill S.R."/>
            <person name="Kirkness E.F."/>
            <person name="Dougherty B.A."/>
            <person name="McKenney K."/>
            <person name="Adams M.D."/>
            <person name="Loftus B.J."/>
            <person name="Peterson S.N."/>
            <person name="Reich C.I."/>
            <person name="McNeil L.K."/>
            <person name="Badger J.H."/>
            <person name="Glodek A."/>
            <person name="Zhou L."/>
            <person name="Overbeek R."/>
            <person name="Gocayne J.D."/>
            <person name="Weidman J.F."/>
            <person name="McDonald L.A."/>
            <person name="Utterback T.R."/>
            <person name="Cotton M.D."/>
            <person name="Spriggs T."/>
            <person name="Artiach P."/>
            <person name="Kaine B.P."/>
            <person name="Sykes S.M."/>
            <person name="Sadow P.W."/>
            <person name="D'Andrea K.P."/>
            <person name="Bowman C."/>
            <person name="Fujii C."/>
            <person name="Garland S.A."/>
            <person name="Mason T.M."/>
            <person name="Olsen G.J."/>
            <person name="Fraser C.M."/>
            <person name="Smith H.O."/>
            <person name="Woese C.R."/>
            <person name="Venter J.C."/>
        </authorList>
    </citation>
    <scope>NUCLEOTIDE SEQUENCE [LARGE SCALE GENOMIC DNA]</scope>
    <source>
        <strain>ATCC 49558 / DSM 4304 / JCM 9628 / NBRC 100126 / VC-16</strain>
    </source>
</reference>
<keyword id="KW-1003">Cell membrane</keyword>
<keyword id="KW-0472">Membrane</keyword>
<keyword id="KW-1185">Reference proteome</keyword>
<keyword id="KW-0812">Transmembrane</keyword>
<keyword id="KW-1133">Transmembrane helix</keyword>
<feature type="chain" id="PRO_0000127863" description="Uncharacterized protein AF_0303">
    <location>
        <begin position="1"/>
        <end position="397"/>
    </location>
</feature>
<feature type="transmembrane region" description="Helical" evidence="1">
    <location>
        <begin position="62"/>
        <end position="79"/>
    </location>
</feature>
<feature type="transmembrane region" description="Helical" evidence="1">
    <location>
        <begin position="92"/>
        <end position="109"/>
    </location>
</feature>
<feature type="transmembrane region" description="Helical" evidence="1">
    <location>
        <begin position="135"/>
        <end position="154"/>
    </location>
</feature>
<feature type="transmembrane region" description="Helical" evidence="1">
    <location>
        <begin position="167"/>
        <end position="189"/>
    </location>
</feature>
<dbReference type="EMBL" id="AE000782">
    <property type="protein sequence ID" value="AAB90936.1"/>
    <property type="molecule type" value="Genomic_DNA"/>
</dbReference>
<dbReference type="PIR" id="G69287">
    <property type="entry name" value="G69287"/>
</dbReference>
<dbReference type="STRING" id="224325.AF_0303"/>
<dbReference type="PaxDb" id="224325-AF_0303"/>
<dbReference type="EnsemblBacteria" id="AAB90936">
    <property type="protein sequence ID" value="AAB90936"/>
    <property type="gene ID" value="AF_0303"/>
</dbReference>
<dbReference type="KEGG" id="afu:AF_0303"/>
<dbReference type="eggNOG" id="arCOG07506">
    <property type="taxonomic scope" value="Archaea"/>
</dbReference>
<dbReference type="HOGENOM" id="CLU_693728_0_0_2"/>
<dbReference type="Proteomes" id="UP000002199">
    <property type="component" value="Chromosome"/>
</dbReference>
<dbReference type="GO" id="GO:0005886">
    <property type="term" value="C:plasma membrane"/>
    <property type="evidence" value="ECO:0007669"/>
    <property type="project" value="UniProtKB-SubCell"/>
</dbReference>
<organism>
    <name type="scientific">Archaeoglobus fulgidus (strain ATCC 49558 / DSM 4304 / JCM 9628 / NBRC 100126 / VC-16)</name>
    <dbReference type="NCBI Taxonomy" id="224325"/>
    <lineage>
        <taxon>Archaea</taxon>
        <taxon>Methanobacteriati</taxon>
        <taxon>Methanobacteriota</taxon>
        <taxon>Archaeoglobi</taxon>
        <taxon>Archaeoglobales</taxon>
        <taxon>Archaeoglobaceae</taxon>
        <taxon>Archaeoglobus</taxon>
    </lineage>
</organism>
<proteinExistence type="predicted"/>
<sequence length="397" mass="46458">MFFVHFWVLSKPPFYSPNPEYPLHNYDTYLIYIKTALFYPLHKFSCFLCVLGSEVIRDQQTVLLFGILIFSIFVALIAINRKNLELDRFAKWYGLLAFGVLTSLELVVTRSGDIANYFGPPEKIFFLPSYRHYPVVFLPLICVYSLSILYSTLSEENKGMIKTSANAFLKTMLFTLLICSFILNFFPGIKTGEHNFVSMSERSAILKTYDVQPDENLKKLHLNPEIVKKRAKKLEELRLSVFAENNILLYKPDEVKLLPKQSQLQGVLRIYNDVKFVLFQHPISNENRSIIVFNEIYIPQNAKLRFSIALHPDVWDPEKGDGVTFEVYIRDEGFEELVFSKYIDPKHNPEERKWNDFEVDLSRYAGRNVTIIFSTLPGPNNDSRWDWAWWGEPRIEW</sequence>
<comment type="subcellular location">
    <subcellularLocation>
        <location evidence="2">Cell membrane</location>
        <topology evidence="2">Multi-pass membrane protein</topology>
    </subcellularLocation>
</comment>
<accession>O29939</accession>